<name>PHSL1_SOLTU</name>
<accession>P04045</accession>
<dbReference type="EC" id="2.4.1.1"/>
<dbReference type="EMBL" id="D00520">
    <property type="protein sequence ID" value="BAA00407.1"/>
    <property type="molecule type" value="mRNA"/>
</dbReference>
<dbReference type="EMBL" id="X52385">
    <property type="protein sequence ID" value="CAA36612.1"/>
    <property type="molecule type" value="mRNA"/>
</dbReference>
<dbReference type="PIR" id="JU0130">
    <property type="entry name" value="PHPOAG"/>
</dbReference>
<dbReference type="RefSeq" id="NP_001275215.1">
    <property type="nucleotide sequence ID" value="NM_001288286.1"/>
</dbReference>
<dbReference type="PDB" id="8R48">
    <property type="method" value="X-ray"/>
    <property type="resolution" value="2.24 A"/>
    <property type="chains" value="A=51-966"/>
</dbReference>
<dbReference type="PDB" id="8R49">
    <property type="method" value="X-ray"/>
    <property type="resolution" value="2.80 A"/>
    <property type="chains" value="A/B/C=51-966"/>
</dbReference>
<dbReference type="PDB" id="8R4G">
    <property type="method" value="X-ray"/>
    <property type="resolution" value="3.10 A"/>
    <property type="chains" value="A/B/C=51-966"/>
</dbReference>
<dbReference type="PDB" id="8R4J">
    <property type="method" value="X-ray"/>
    <property type="resolution" value="3.70 A"/>
    <property type="chains" value="A/B/C=51-966"/>
</dbReference>
<dbReference type="PDB" id="8R4K">
    <property type="method" value="X-ray"/>
    <property type="resolution" value="3.30 A"/>
    <property type="chains" value="A/B/C=51-966"/>
</dbReference>
<dbReference type="PDBsum" id="8R48"/>
<dbReference type="PDBsum" id="8R49"/>
<dbReference type="PDBsum" id="8R4G"/>
<dbReference type="PDBsum" id="8R4J"/>
<dbReference type="PDBsum" id="8R4K"/>
<dbReference type="SMR" id="P04045"/>
<dbReference type="FunCoup" id="P04045">
    <property type="interactions" value="1989"/>
</dbReference>
<dbReference type="IntAct" id="P04045">
    <property type="interactions" value="1"/>
</dbReference>
<dbReference type="STRING" id="4113.P04045"/>
<dbReference type="CAZy" id="GT35">
    <property type="family name" value="Glycosyltransferase Family 35"/>
</dbReference>
<dbReference type="PaxDb" id="4113-PGSC0003DMT400020094"/>
<dbReference type="ProMEX" id="P04045"/>
<dbReference type="GeneID" id="102596766"/>
<dbReference type="KEGG" id="sot:102596766"/>
<dbReference type="eggNOG" id="KOG2099">
    <property type="taxonomic scope" value="Eukaryota"/>
</dbReference>
<dbReference type="InParanoid" id="P04045"/>
<dbReference type="OrthoDB" id="9215500at2759"/>
<dbReference type="Proteomes" id="UP000011115">
    <property type="component" value="Unassembled WGS sequence"/>
</dbReference>
<dbReference type="ExpressionAtlas" id="P04045">
    <property type="expression patterns" value="baseline and differential"/>
</dbReference>
<dbReference type="GO" id="GO:0009501">
    <property type="term" value="C:amyloplast"/>
    <property type="evidence" value="ECO:0007669"/>
    <property type="project" value="UniProtKB-SubCell"/>
</dbReference>
<dbReference type="GO" id="GO:0009507">
    <property type="term" value="C:chloroplast"/>
    <property type="evidence" value="ECO:0007669"/>
    <property type="project" value="UniProtKB-SubCell"/>
</dbReference>
<dbReference type="GO" id="GO:0005737">
    <property type="term" value="C:cytoplasm"/>
    <property type="evidence" value="ECO:0000318"/>
    <property type="project" value="GO_Central"/>
</dbReference>
<dbReference type="GO" id="GO:0008184">
    <property type="term" value="F:glycogen phosphorylase activity"/>
    <property type="evidence" value="ECO:0000318"/>
    <property type="project" value="GO_Central"/>
</dbReference>
<dbReference type="GO" id="GO:0042802">
    <property type="term" value="F:identical protein binding"/>
    <property type="evidence" value="ECO:0000353"/>
    <property type="project" value="IntAct"/>
</dbReference>
<dbReference type="GO" id="GO:0030170">
    <property type="term" value="F:pyridoxal phosphate binding"/>
    <property type="evidence" value="ECO:0000318"/>
    <property type="project" value="GO_Central"/>
</dbReference>
<dbReference type="GO" id="GO:0005980">
    <property type="term" value="P:glycogen catabolic process"/>
    <property type="evidence" value="ECO:0000318"/>
    <property type="project" value="GO_Central"/>
</dbReference>
<dbReference type="CDD" id="cd04300">
    <property type="entry name" value="GT35_Glycogen_Phosphorylase"/>
    <property type="match status" value="1"/>
</dbReference>
<dbReference type="FunFam" id="3.40.50.2000:FF:000003">
    <property type="entry name" value="Alpha-1,4 glucan phosphorylase"/>
    <property type="match status" value="1"/>
</dbReference>
<dbReference type="FunFam" id="3.40.50.2000:FF:000105">
    <property type="entry name" value="Alpha-1,4 glucan phosphorylase"/>
    <property type="match status" value="1"/>
</dbReference>
<dbReference type="Gene3D" id="3.40.50.2000">
    <property type="entry name" value="Glycogen Phosphorylase B"/>
    <property type="match status" value="3"/>
</dbReference>
<dbReference type="InterPro" id="IPR011833">
    <property type="entry name" value="Glycg_phsphrylas"/>
</dbReference>
<dbReference type="InterPro" id="IPR000811">
    <property type="entry name" value="Glyco_trans_35"/>
</dbReference>
<dbReference type="InterPro" id="IPR035090">
    <property type="entry name" value="Pyridoxal_P_attach_site"/>
</dbReference>
<dbReference type="NCBIfam" id="TIGR02093">
    <property type="entry name" value="P_ylase"/>
    <property type="match status" value="1"/>
</dbReference>
<dbReference type="PANTHER" id="PTHR11468:SF28">
    <property type="entry name" value="ALPHA-GLUCAN PHOSPHORYLASE 1"/>
    <property type="match status" value="1"/>
</dbReference>
<dbReference type="PANTHER" id="PTHR11468">
    <property type="entry name" value="GLYCOGEN PHOSPHORYLASE"/>
    <property type="match status" value="1"/>
</dbReference>
<dbReference type="Pfam" id="PF00343">
    <property type="entry name" value="Phosphorylase"/>
    <property type="match status" value="2"/>
</dbReference>
<dbReference type="PIRSF" id="PIRSF000460">
    <property type="entry name" value="Pprylas_GlgP"/>
    <property type="match status" value="1"/>
</dbReference>
<dbReference type="SUPFAM" id="SSF53756">
    <property type="entry name" value="UDP-Glycosyltransferase/glycogen phosphorylase"/>
    <property type="match status" value="2"/>
</dbReference>
<dbReference type="PROSITE" id="PS00102">
    <property type="entry name" value="PHOSPHORYLASE"/>
    <property type="match status" value="1"/>
</dbReference>
<comment type="function">
    <text>Phosphorylase is an important allosteric enzyme in carbohydrate metabolism. Enzymes from different sources differ in their regulatory mechanisms and in their natural substrates. However, all known phosphorylases share catalytic and structural properties.</text>
</comment>
<comment type="catalytic activity">
    <reaction>
        <text>[(1-&gt;4)-alpha-D-glucosyl](n) + phosphate = [(1-&gt;4)-alpha-D-glucosyl](n-1) + alpha-D-glucose 1-phosphate</text>
        <dbReference type="Rhea" id="RHEA:41732"/>
        <dbReference type="Rhea" id="RHEA-COMP:9584"/>
        <dbReference type="Rhea" id="RHEA-COMP:9586"/>
        <dbReference type="ChEBI" id="CHEBI:15444"/>
        <dbReference type="ChEBI" id="CHEBI:43474"/>
        <dbReference type="ChEBI" id="CHEBI:58601"/>
        <dbReference type="EC" id="2.4.1.1"/>
    </reaction>
</comment>
<comment type="cofactor">
    <cofactor>
        <name>pyridoxal 5'-phosphate</name>
        <dbReference type="ChEBI" id="CHEBI:597326"/>
    </cofactor>
</comment>
<comment type="interaction">
    <interactant intactId="EBI-780963">
        <id>P04045</id>
    </interactant>
    <interactant intactId="EBI-780963">
        <id>P04045</id>
        <label>-</label>
    </interactant>
    <organismsDiffer>false</organismsDiffer>
    <experiments>2</experiments>
</comment>
<comment type="interaction">
    <interactant intactId="EBI-780963">
        <id>P04045</id>
    </interactant>
    <interactant intactId="EBI-780968">
        <id>P53535</id>
        <label>STP-1</label>
    </interactant>
    <organismsDiffer>false</organismsDiffer>
    <experiments>2</experiments>
</comment>
<comment type="subcellular location">
    <subcellularLocation>
        <location>Plastid</location>
        <location>Chloroplast</location>
    </subcellularLocation>
    <subcellularLocation>
        <location>Plastid</location>
        <location>Amyloplast</location>
    </subcellularLocation>
</comment>
<comment type="tissue specificity">
    <text>Tuber.</text>
</comment>
<comment type="similarity">
    <text evidence="4">Belongs to the glycogen phosphorylase family.</text>
</comment>
<feature type="transit peptide" description="Chloroplast" evidence="2 3">
    <location>
        <begin position="1"/>
        <end position="50"/>
    </location>
</feature>
<feature type="chain" id="PRO_0000012292" description="Alpha-1,4 glucan phosphorylase L-1 isozyme, chloroplastic/amyloplastic">
    <location>
        <begin position="51"/>
        <end position="966"/>
    </location>
</feature>
<feature type="modified residue" description="N6-(pyridoxal phosphate)lysine" evidence="1">
    <location>
        <position position="812"/>
    </location>
</feature>
<feature type="sequence conflict" description="In Ref. 2; CAA36612." evidence="4" ref="2">
    <original>A</original>
    <variation>D</variation>
    <location>
        <position position="159"/>
    </location>
</feature>
<feature type="helix" evidence="5">
    <location>
        <begin position="76"/>
        <end position="89"/>
    </location>
</feature>
<feature type="helix" evidence="5">
    <location>
        <begin position="100"/>
        <end position="129"/>
    </location>
</feature>
<feature type="strand" evidence="5">
    <location>
        <begin position="133"/>
        <end position="137"/>
    </location>
</feature>
<feature type="helix" evidence="5">
    <location>
        <begin position="147"/>
        <end position="153"/>
    </location>
</feature>
<feature type="helix" evidence="5">
    <location>
        <begin position="157"/>
        <end position="166"/>
    </location>
</feature>
<feature type="helix" evidence="5">
    <location>
        <begin position="171"/>
        <end position="175"/>
    </location>
</feature>
<feature type="helix" evidence="5">
    <location>
        <begin position="187"/>
        <end position="201"/>
    </location>
</feature>
<feature type="strand" evidence="5">
    <location>
        <begin position="206"/>
        <end position="211"/>
    </location>
</feature>
<feature type="strand" evidence="5">
    <location>
        <begin position="219"/>
        <end position="223"/>
    </location>
</feature>
<feature type="strand" evidence="5">
    <location>
        <begin position="226"/>
        <end position="230"/>
    </location>
</feature>
<feature type="strand" evidence="5">
    <location>
        <begin position="243"/>
        <end position="255"/>
    </location>
</feature>
<feature type="strand" evidence="5">
    <location>
        <begin position="257"/>
        <end position="260"/>
    </location>
</feature>
<feature type="strand" evidence="5">
    <location>
        <begin position="266"/>
        <end position="269"/>
    </location>
</feature>
<feature type="strand" evidence="5">
    <location>
        <begin position="271"/>
        <end position="284"/>
    </location>
</feature>
<feature type="strand" evidence="5">
    <location>
        <begin position="291"/>
        <end position="300"/>
    </location>
</feature>
<feature type="helix" evidence="5">
    <location>
        <begin position="303"/>
        <end position="305"/>
    </location>
</feature>
<feature type="helix" evidence="5">
    <location>
        <begin position="308"/>
        <end position="312"/>
    </location>
</feature>
<feature type="helix" evidence="5">
    <location>
        <begin position="316"/>
        <end position="319"/>
    </location>
</feature>
<feature type="helix" evidence="5">
    <location>
        <begin position="321"/>
        <end position="327"/>
    </location>
</feature>
<feature type="helix" evidence="5">
    <location>
        <begin position="328"/>
        <end position="330"/>
    </location>
</feature>
<feature type="strand" evidence="5">
    <location>
        <begin position="332"/>
        <end position="334"/>
    </location>
</feature>
<feature type="helix" evidence="5">
    <location>
        <begin position="340"/>
        <end position="369"/>
    </location>
</feature>
<feature type="helix" evidence="5">
    <location>
        <begin position="375"/>
        <end position="377"/>
    </location>
</feature>
<feature type="helix" evidence="5">
    <location>
        <begin position="378"/>
        <end position="381"/>
    </location>
</feature>
<feature type="strand" evidence="5">
    <location>
        <begin position="382"/>
        <end position="389"/>
    </location>
</feature>
<feature type="helix" evidence="5">
    <location>
        <begin position="390"/>
        <end position="393"/>
    </location>
</feature>
<feature type="helix" evidence="5">
    <location>
        <begin position="394"/>
        <end position="404"/>
    </location>
</feature>
<feature type="helix" evidence="5">
    <location>
        <begin position="410"/>
        <end position="420"/>
    </location>
</feature>
<feature type="strand" evidence="5">
    <location>
        <begin position="421"/>
        <end position="424"/>
    </location>
</feature>
<feature type="strand" evidence="6">
    <location>
        <begin position="428"/>
        <end position="430"/>
    </location>
</feature>
<feature type="strand" evidence="5">
    <location>
        <begin position="435"/>
        <end position="437"/>
    </location>
</feature>
<feature type="helix" evidence="5">
    <location>
        <begin position="438"/>
        <end position="444"/>
    </location>
</feature>
<feature type="helix" evidence="5">
    <location>
        <begin position="446"/>
        <end position="465"/>
    </location>
</feature>
<feature type="strand" evidence="5">
    <location>
        <begin position="469"/>
        <end position="472"/>
    </location>
</feature>
<feature type="helix" evidence="5">
    <location>
        <begin position="473"/>
        <end position="482"/>
    </location>
</feature>
<feature type="strand" evidence="5">
    <location>
        <begin position="484"/>
        <end position="487"/>
    </location>
</feature>
<feature type="strand" evidence="5">
    <location>
        <begin position="565"/>
        <end position="567"/>
    </location>
</feature>
<feature type="helix" evidence="5">
    <location>
        <begin position="568"/>
        <end position="575"/>
    </location>
</feature>
<feature type="strand" evidence="5">
    <location>
        <begin position="576"/>
        <end position="583"/>
    </location>
</feature>
<feature type="helix" evidence="5">
    <location>
        <begin position="584"/>
        <end position="592"/>
    </location>
</feature>
<feature type="turn" evidence="7">
    <location>
        <begin position="593"/>
        <end position="595"/>
    </location>
</feature>
<feature type="helix" evidence="5">
    <location>
        <begin position="596"/>
        <end position="601"/>
    </location>
</feature>
<feature type="helix" evidence="5">
    <location>
        <begin position="603"/>
        <end position="605"/>
    </location>
</feature>
<feature type="strand" evidence="5">
    <location>
        <begin position="606"/>
        <end position="608"/>
    </location>
</feature>
<feature type="helix" evidence="5">
    <location>
        <begin position="615"/>
        <end position="618"/>
    </location>
</feature>
<feature type="turn" evidence="5">
    <location>
        <begin position="619"/>
        <end position="622"/>
    </location>
</feature>
<feature type="helix" evidence="5">
    <location>
        <begin position="624"/>
        <end position="634"/>
    </location>
</feature>
<feature type="strand" evidence="5">
    <location>
        <begin position="635"/>
        <end position="637"/>
    </location>
</feature>
<feature type="helix" evidence="5">
    <location>
        <begin position="638"/>
        <end position="640"/>
    </location>
</feature>
<feature type="helix" evidence="5">
    <location>
        <begin position="643"/>
        <end position="652"/>
    </location>
</feature>
<feature type="helix" evidence="5">
    <location>
        <begin position="656"/>
        <end position="681"/>
    </location>
</feature>
<feature type="strand" evidence="5">
    <location>
        <begin position="687"/>
        <end position="696"/>
    </location>
</feature>
<feature type="turn" evidence="5">
    <location>
        <begin position="700"/>
        <end position="702"/>
    </location>
</feature>
<feature type="helix" evidence="5">
    <location>
        <begin position="704"/>
        <end position="719"/>
    </location>
</feature>
<feature type="helix" evidence="5">
    <location>
        <begin position="723"/>
        <end position="729"/>
    </location>
</feature>
<feature type="strand" evidence="5">
    <location>
        <begin position="733"/>
        <end position="738"/>
    </location>
</feature>
<feature type="helix" evidence="5">
    <location>
        <begin position="746"/>
        <end position="763"/>
    </location>
</feature>
<feature type="turn" evidence="5">
    <location>
        <begin position="766"/>
        <end position="768"/>
    </location>
</feature>
<feature type="helix" evidence="5">
    <location>
        <begin position="769"/>
        <end position="771"/>
    </location>
</feature>
<feature type="strand" evidence="5">
    <location>
        <begin position="772"/>
        <end position="779"/>
    </location>
</feature>
<feature type="helix" evidence="5">
    <location>
        <begin position="782"/>
        <end position="788"/>
    </location>
</feature>
<feature type="helix" evidence="5">
    <location>
        <begin position="789"/>
        <end position="791"/>
    </location>
</feature>
<feature type="strand" evidence="5">
    <location>
        <begin position="793"/>
        <end position="797"/>
    </location>
</feature>
<feature type="strand" evidence="6">
    <location>
        <begin position="801"/>
        <end position="803"/>
    </location>
</feature>
<feature type="turn" evidence="5">
    <location>
        <begin position="814"/>
        <end position="817"/>
    </location>
</feature>
<feature type="strand" evidence="5">
    <location>
        <begin position="819"/>
        <end position="822"/>
    </location>
</feature>
<feature type="helix" evidence="5">
    <location>
        <begin position="827"/>
        <end position="835"/>
    </location>
</feature>
<feature type="helix" evidence="5">
    <location>
        <begin position="837"/>
        <end position="839"/>
    </location>
</feature>
<feature type="strand" evidence="5">
    <location>
        <begin position="840"/>
        <end position="842"/>
    </location>
</feature>
<feature type="helix" evidence="5">
    <location>
        <begin position="847"/>
        <end position="849"/>
    </location>
</feature>
<feature type="helix" evidence="5">
    <location>
        <begin position="850"/>
        <end position="858"/>
    </location>
</feature>
<feature type="helix" evidence="5">
    <location>
        <begin position="866"/>
        <end position="876"/>
    </location>
</feature>
<feature type="turn" evidence="5">
    <location>
        <begin position="877"/>
        <end position="880"/>
    </location>
</feature>
<feature type="helix" evidence="5">
    <location>
        <begin position="886"/>
        <end position="890"/>
    </location>
</feature>
<feature type="strand" evidence="6">
    <location>
        <begin position="893"/>
        <end position="897"/>
    </location>
</feature>
<feature type="turn" evidence="5">
    <location>
        <begin position="901"/>
        <end position="904"/>
    </location>
</feature>
<feature type="helix" evidence="5">
    <location>
        <begin position="906"/>
        <end position="925"/>
    </location>
</feature>
<feature type="helix" evidence="5">
    <location>
        <begin position="927"/>
        <end position="939"/>
    </location>
</feature>
<feature type="helix" evidence="5">
    <location>
        <begin position="942"/>
        <end position="944"/>
    </location>
</feature>
<feature type="helix" evidence="5">
    <location>
        <begin position="946"/>
        <end position="956"/>
    </location>
</feature>
<evidence type="ECO:0000250" key="1"/>
<evidence type="ECO:0000269" key="2">
    <source>
    </source>
</evidence>
<evidence type="ECO:0000269" key="3">
    <source>
    </source>
</evidence>
<evidence type="ECO:0000305" key="4"/>
<evidence type="ECO:0007829" key="5">
    <source>
        <dbReference type="PDB" id="8R48"/>
    </source>
</evidence>
<evidence type="ECO:0007829" key="6">
    <source>
        <dbReference type="PDB" id="8R49"/>
    </source>
</evidence>
<evidence type="ECO:0007829" key="7">
    <source>
        <dbReference type="PDB" id="8R4G"/>
    </source>
</evidence>
<organism>
    <name type="scientific">Solanum tuberosum</name>
    <name type="common">Potato</name>
    <dbReference type="NCBI Taxonomy" id="4113"/>
    <lineage>
        <taxon>Eukaryota</taxon>
        <taxon>Viridiplantae</taxon>
        <taxon>Streptophyta</taxon>
        <taxon>Embryophyta</taxon>
        <taxon>Tracheophyta</taxon>
        <taxon>Spermatophyta</taxon>
        <taxon>Magnoliopsida</taxon>
        <taxon>eudicotyledons</taxon>
        <taxon>Gunneridae</taxon>
        <taxon>Pentapetalae</taxon>
        <taxon>asterids</taxon>
        <taxon>lamiids</taxon>
        <taxon>Solanales</taxon>
        <taxon>Solanaceae</taxon>
        <taxon>Solanoideae</taxon>
        <taxon>Solaneae</taxon>
        <taxon>Solanum</taxon>
    </lineage>
</organism>
<keyword id="KW-0002">3D-structure</keyword>
<keyword id="KW-0021">Allosteric enzyme</keyword>
<keyword id="KW-0035">Amyloplast</keyword>
<keyword id="KW-0119">Carbohydrate metabolism</keyword>
<keyword id="KW-0150">Chloroplast</keyword>
<keyword id="KW-0903">Direct protein sequencing</keyword>
<keyword id="KW-0328">Glycosyltransferase</keyword>
<keyword id="KW-0934">Plastid</keyword>
<keyword id="KW-0663">Pyridoxal phosphate</keyword>
<keyword id="KW-1185">Reference proteome</keyword>
<keyword id="KW-0808">Transferase</keyword>
<keyword id="KW-0809">Transit peptide</keyword>
<reference key="1">
    <citation type="journal article" date="1989" name="J. Biochem.">
        <title>Molecular cloning of cDNA encoding potato amyloplast alpha-glucan phosphorylase and the structure of its transit peptide.</title>
        <authorList>
            <person name="Nakano K."/>
            <person name="Mori H."/>
            <person name="Fukui T."/>
        </authorList>
    </citation>
    <scope>NUCLEOTIDE SEQUENCE [MRNA]</scope>
</reference>
<reference key="2">
    <citation type="journal article" date="1990" name="Mol. Gen. Genet.">
        <title>Occurrence of a copia-like transposable element in one of the introns of the potato starch phosphorylase gene.</title>
        <authorList>
            <person name="Camirand A."/>
            <person name="St Pierre B."/>
            <person name="Marineau C."/>
            <person name="Brisson N."/>
        </authorList>
    </citation>
    <scope>NUCLEOTIDE SEQUENCE [MRNA]</scope>
    <source>
        <strain>cv. Kennebec</strain>
    </source>
</reference>
<reference key="3">
    <citation type="journal article" date="1986" name="J. Biol. Chem.">
        <title>The complete amino acid sequence of potato alpha-glucan phosphorylase.</title>
        <authorList>
            <person name="Nakano K."/>
            <person name="Fukui T."/>
        </authorList>
    </citation>
    <scope>PROTEIN SEQUENCE OF 51-966</scope>
</reference>
<reference key="4">
    <citation type="journal article" date="1980" name="J. Biol. Chem.">
        <title>Structural basis for the difference of the regulatory properties between potato and rabbit muscle phosphorylases. The NH2-terminal sequence of the potato enzyme.</title>
        <authorList>
            <person name="Nakano K."/>
            <person name="Fukui T."/>
            <person name="Matsubara H."/>
        </authorList>
    </citation>
    <scope>PROTEIN SEQUENCE OF 51-131</scope>
</reference>
<sequence>MATANGAHLFNHYSSNSRFIHFTSRNTSSKLFLTKTSHFRRPKRCFHVNNTLSEKIHHPITEQGGESDLSSFAPDAASITSSIKYHAEFTPVFSPERFELPKAFFATAQSVRDSLLINWNATYDIYEKLNMKQAYYLSMEFLQGRALLNAIGNLELTGAFAEALKNLGHNLENVASQEPDAALGNGGLGRLASCFLDSLATLNYPAWGYGLRYKYGLFKQRITKDGQEEVAEDWLEIGSPWEVVRNDVSYPIKFYGKVSTGSDGKRYWIGGEDIKAVAYDVPIPGYKTRTTISLRLWSTQVPSADFDLSAFNAGEHTKACEAQANAEKICYILYPGDESEEGKILRLKQQYTLCSASLQDIISRFERRSGDRIKWEEFPEKVAVQMNDTHPTLCIPELMRILIDLKGLNWNEAWNITQRTVAYTNHTVLPEALEKWSYELMQKLLPRHVEIIEAIDEELVHEIVLKYGSMDLNKLEEKLTTMRILENFDLPSSVAELFIKPEISVDDDTETVEVHDKVEASDKVVTNDEDDTGKKTSVKIEAAAEKDIDKKTPVSPEPAVIPPKKVRMANLCVVGGHAVNGVAEIHSEIVKEEVFNDFYELWPEKFQNKTNGVTPRRWIRFCNPPLSAIITKWTGTEDWVLKTEKLAELQKFADNEDLQNEWREAKRSNKIKVVSFLKEKTGYSVVPDAMFDIQVKRIHEYKRQLLNIFGIVYRYKKMKEMTAAERKTNFVPRVCIFGGKAFATYVQAKRIVKFITDVGATINHDPEIGDLLKVVFVPDYNVSVAELLIPASDLSEHISTAGMEASGTSNMKFAMNGCIQIGTLDGANVEIREEVGEENFFLFGAQAHEIAGLRKERADGKFVPDERFEEVKEFVRSGAFGSYNYDDLIGSLEGNEGFGRADYFLVGKDFPSYIECQEKVDEAYRDQKRWTTMSILNTAGSYKFSSDRTIHEYAKDIWNIEAVEIA</sequence>
<proteinExistence type="evidence at protein level"/>
<protein>
    <recommendedName>
        <fullName>Alpha-1,4 glucan phosphorylase L-1 isozyme, chloroplastic/amyloplastic</fullName>
        <ecNumber>2.4.1.1</ecNumber>
    </recommendedName>
    <alternativeName>
        <fullName>Starch phosphorylase L-1</fullName>
    </alternativeName>
</protein>